<name>AAS_CITK8</name>
<organism>
    <name type="scientific">Citrobacter koseri (strain ATCC BAA-895 / CDC 4225-83 / SGSC4696)</name>
    <dbReference type="NCBI Taxonomy" id="290338"/>
    <lineage>
        <taxon>Bacteria</taxon>
        <taxon>Pseudomonadati</taxon>
        <taxon>Pseudomonadota</taxon>
        <taxon>Gammaproteobacteria</taxon>
        <taxon>Enterobacterales</taxon>
        <taxon>Enterobacteriaceae</taxon>
        <taxon>Citrobacter</taxon>
    </lineage>
</organism>
<comment type="function">
    <text evidence="1">Plays a role in lysophospholipid acylation. Transfers fatty acids to the 1-position via an enzyme-bound acyl-ACP intermediate in the presence of ATP and magnesium. Its physiological function is to regenerate phosphatidylethanolamine from 2-acyl-glycero-3-phosphoethanolamine (2-acyl-GPE) formed by transacylation reactions or degradation by phospholipase A1.</text>
</comment>
<comment type="catalytic activity">
    <reaction evidence="1">
        <text>a 2-acyl-sn-glycero-3-phosphoethanolamine + a fatty acyl-[ACP] = a 1,2-diacyl-sn-glycero-3-phosphoethanolamine + holo-[ACP]</text>
        <dbReference type="Rhea" id="RHEA:10304"/>
        <dbReference type="Rhea" id="RHEA-COMP:9685"/>
        <dbReference type="Rhea" id="RHEA-COMP:14125"/>
        <dbReference type="ChEBI" id="CHEBI:64479"/>
        <dbReference type="ChEBI" id="CHEBI:64612"/>
        <dbReference type="ChEBI" id="CHEBI:65213"/>
        <dbReference type="ChEBI" id="CHEBI:138651"/>
        <dbReference type="EC" id="2.3.1.40"/>
    </reaction>
</comment>
<comment type="catalytic activity">
    <reaction evidence="1">
        <text>a long-chain fatty acid + holo-[ACP] + ATP = a long-chain fatty acyl-[ACP] + AMP + diphosphate</text>
        <dbReference type="Rhea" id="RHEA:45588"/>
        <dbReference type="Rhea" id="RHEA-COMP:9685"/>
        <dbReference type="Rhea" id="RHEA-COMP:12682"/>
        <dbReference type="ChEBI" id="CHEBI:30616"/>
        <dbReference type="ChEBI" id="CHEBI:33019"/>
        <dbReference type="ChEBI" id="CHEBI:57560"/>
        <dbReference type="ChEBI" id="CHEBI:64479"/>
        <dbReference type="ChEBI" id="CHEBI:133243"/>
        <dbReference type="ChEBI" id="CHEBI:456215"/>
        <dbReference type="EC" id="6.2.1.20"/>
    </reaction>
</comment>
<comment type="subcellular location">
    <subcellularLocation>
        <location evidence="1">Cell inner membrane</location>
        <topology evidence="1">Multi-pass membrane protein</topology>
    </subcellularLocation>
</comment>
<comment type="similarity">
    <text evidence="1">In the N-terminal section; belongs to the 2-acyl-GPE acetyltransferase family.</text>
</comment>
<comment type="similarity">
    <text evidence="1">In the C-terminal section; belongs to the ATP-dependent AMP-binding enzyme family.</text>
</comment>
<evidence type="ECO:0000255" key="1">
    <source>
        <dbReference type="HAMAP-Rule" id="MF_01162"/>
    </source>
</evidence>
<reference key="1">
    <citation type="submission" date="2007-08" db="EMBL/GenBank/DDBJ databases">
        <authorList>
            <consortium name="The Citrobacter koseri Genome Sequencing Project"/>
            <person name="McClelland M."/>
            <person name="Sanderson E.K."/>
            <person name="Porwollik S."/>
            <person name="Spieth J."/>
            <person name="Clifton W.S."/>
            <person name="Latreille P."/>
            <person name="Courtney L."/>
            <person name="Wang C."/>
            <person name="Pepin K."/>
            <person name="Bhonagiri V."/>
            <person name="Nash W."/>
            <person name="Johnson M."/>
            <person name="Thiruvilangam P."/>
            <person name="Wilson R."/>
        </authorList>
    </citation>
    <scope>NUCLEOTIDE SEQUENCE [LARGE SCALE GENOMIC DNA]</scope>
    <source>
        <strain>ATCC BAA-895 / CDC 4225-83 / SGSC4696</strain>
    </source>
</reference>
<protein>
    <recommendedName>
        <fullName evidence="1">Bifunctional protein Aas</fullName>
    </recommendedName>
    <domain>
        <recommendedName>
            <fullName evidence="1">2-acylglycerophosphoethanolamine acyltransferase</fullName>
            <ecNumber evidence="1">2.3.1.40</ecNumber>
        </recommendedName>
        <alternativeName>
            <fullName evidence="1">2-acyl-GPE acyltransferase</fullName>
        </alternativeName>
        <alternativeName>
            <fullName evidence="1">Acyl-[acyl-carrier-protein]--phospholipid O-acyltransferase</fullName>
        </alternativeName>
    </domain>
    <domain>
        <recommendedName>
            <fullName evidence="1">Acyl-[acyl-carrier-protein] synthetase</fullName>
            <ecNumber evidence="1">6.2.1.20</ecNumber>
        </recommendedName>
        <alternativeName>
            <fullName evidence="1">Acyl-ACP synthetase</fullName>
        </alternativeName>
        <alternativeName>
            <fullName evidence="1">Long-chain-fatty-acid--[acyl-carrier-protein] ligase</fullName>
        </alternativeName>
    </domain>
</protein>
<gene>
    <name evidence="1" type="primary">aas</name>
    <name type="ordered locus">CKO_04208</name>
</gene>
<proteinExistence type="inferred from homology"/>
<keyword id="KW-0012">Acyltransferase</keyword>
<keyword id="KW-0067">ATP-binding</keyword>
<keyword id="KW-0997">Cell inner membrane</keyword>
<keyword id="KW-1003">Cell membrane</keyword>
<keyword id="KW-0436">Ligase</keyword>
<keyword id="KW-0472">Membrane</keyword>
<keyword id="KW-0511">Multifunctional enzyme</keyword>
<keyword id="KW-0547">Nucleotide-binding</keyword>
<keyword id="KW-1185">Reference proteome</keyword>
<keyword id="KW-0808">Transferase</keyword>
<keyword id="KW-0812">Transmembrane</keyword>
<keyword id="KW-1133">Transmembrane helix</keyword>
<sequence>MLFGFFRNLFRVLYRVRVTGDARALQGERILITPNHVSFIDGILLALFLPVRPVFAVYSSISQQWYMRWLKSLIDFVPLDPTKPMAIKHLVRLVEQGRPVVIFPEGRISVSGSLMKIYDGAGFVAAKSGATVVPVRIEGAELTHFSRLKGLVKQRFFPRIHLHILPPTHLPMPEAPRARERRKLAGEMLHQIMMEARMAVRPRETLYESLLAAQYRYGAGKNCVEDINFTPDTYRKLLTKTLFVGRILEKYSAQGENIGLMLPNAAISAAVIFGAVSRGRIPAMMNYTAGVKGLTSAITAAEIKTVFTSRQFLEKGKLWHLPEQLTQVRWIYLEDLKADVTLADKLWIFAHLLMPRLAQVKQRPEEAAMILFTSGSEGHPKGVVHSHKSLLANVEQIKTIADFTANDRFMSALPLFHSFGLTVGLLTPLLTGAEVFLYPSPLHYRIVPELVYDRNCTVLFGTSTFLGNYARFANPYDFYRLRYVVAGAEKLQDSTRQLWQDKFGLRVLEGYGVTECAPVVSINVPMAAKPGTVGRILPGMDARLLAVPGIDDGGRLQLKGPNIMNGYLRVEKPGVLEAPAAENALGDVEQGWYDTGDIVRFDENGFVQIQGRAKRFAKIAGEMVSLEMVEQLALGVSPDKMHATAIKSDASKGEALVLFTTDGELTRESLLQYARTHGIPELAVPRDIRYLKQLPLLGSGKPDFVTLKSWVDEPEKQHA</sequence>
<feature type="chain" id="PRO_1000065633" description="Bifunctional protein Aas">
    <location>
        <begin position="1"/>
        <end position="719"/>
    </location>
</feature>
<feature type="transmembrane region" description="Helical" evidence="1">
    <location>
        <begin position="258"/>
        <end position="277"/>
    </location>
</feature>
<feature type="transmembrane region" description="Helical" evidence="1">
    <location>
        <begin position="409"/>
        <end position="433"/>
    </location>
</feature>
<feature type="region of interest" description="Acyltransferase">
    <location>
        <begin position="15"/>
        <end position="138"/>
    </location>
</feature>
<feature type="region of interest" description="AMP-binding">
    <location>
        <begin position="233"/>
        <end position="646"/>
    </location>
</feature>
<feature type="active site" evidence="1">
    <location>
        <position position="36"/>
    </location>
</feature>
<dbReference type="EC" id="2.3.1.40" evidence="1"/>
<dbReference type="EC" id="6.2.1.20" evidence="1"/>
<dbReference type="EMBL" id="CP000822">
    <property type="protein sequence ID" value="ABV15269.1"/>
    <property type="molecule type" value="Genomic_DNA"/>
</dbReference>
<dbReference type="RefSeq" id="WP_012134954.1">
    <property type="nucleotide sequence ID" value="NC_009792.1"/>
</dbReference>
<dbReference type="SMR" id="A8AP56"/>
<dbReference type="STRING" id="290338.CKO_04208"/>
<dbReference type="GeneID" id="45137823"/>
<dbReference type="KEGG" id="cko:CKO_04208"/>
<dbReference type="HOGENOM" id="CLU_000022_59_8_6"/>
<dbReference type="OrthoDB" id="9803968at2"/>
<dbReference type="Proteomes" id="UP000008148">
    <property type="component" value="Chromosome"/>
</dbReference>
<dbReference type="GO" id="GO:0005886">
    <property type="term" value="C:plasma membrane"/>
    <property type="evidence" value="ECO:0007669"/>
    <property type="project" value="UniProtKB-SubCell"/>
</dbReference>
<dbReference type="GO" id="GO:0008779">
    <property type="term" value="F:acyl-[acyl-carrier-protein]-phospholipid O-acyltransferase activity"/>
    <property type="evidence" value="ECO:0007669"/>
    <property type="project" value="UniProtKB-UniRule"/>
</dbReference>
<dbReference type="GO" id="GO:0005524">
    <property type="term" value="F:ATP binding"/>
    <property type="evidence" value="ECO:0007669"/>
    <property type="project" value="UniProtKB-KW"/>
</dbReference>
<dbReference type="GO" id="GO:0008922">
    <property type="term" value="F:long-chain fatty acid [acyl-carrier-protein] ligase activity"/>
    <property type="evidence" value="ECO:0007669"/>
    <property type="project" value="UniProtKB-UniRule"/>
</dbReference>
<dbReference type="GO" id="GO:0031956">
    <property type="term" value="F:medium-chain fatty acid-CoA ligase activity"/>
    <property type="evidence" value="ECO:0007669"/>
    <property type="project" value="TreeGrafter"/>
</dbReference>
<dbReference type="GO" id="GO:0006631">
    <property type="term" value="P:fatty acid metabolic process"/>
    <property type="evidence" value="ECO:0007669"/>
    <property type="project" value="InterPro"/>
</dbReference>
<dbReference type="GO" id="GO:0008654">
    <property type="term" value="P:phospholipid biosynthetic process"/>
    <property type="evidence" value="ECO:0007669"/>
    <property type="project" value="InterPro"/>
</dbReference>
<dbReference type="CDD" id="cd05909">
    <property type="entry name" value="AAS_C"/>
    <property type="match status" value="1"/>
</dbReference>
<dbReference type="CDD" id="cd07989">
    <property type="entry name" value="LPLAT_AGPAT-like"/>
    <property type="match status" value="1"/>
</dbReference>
<dbReference type="FunFam" id="3.40.50.12780:FF:000009">
    <property type="entry name" value="Bifunctional protein Aas"/>
    <property type="match status" value="1"/>
</dbReference>
<dbReference type="Gene3D" id="3.30.300.30">
    <property type="match status" value="1"/>
</dbReference>
<dbReference type="Gene3D" id="3.40.50.12780">
    <property type="entry name" value="N-terminal domain of ligase-like"/>
    <property type="match status" value="1"/>
</dbReference>
<dbReference type="HAMAP" id="MF_01162">
    <property type="entry name" value="Aas"/>
    <property type="match status" value="1"/>
</dbReference>
<dbReference type="InterPro" id="IPR023775">
    <property type="entry name" value="Aas"/>
</dbReference>
<dbReference type="InterPro" id="IPR045851">
    <property type="entry name" value="AMP-bd_C_sf"/>
</dbReference>
<dbReference type="InterPro" id="IPR020845">
    <property type="entry name" value="AMP-binding_CS"/>
</dbReference>
<dbReference type="InterPro" id="IPR000873">
    <property type="entry name" value="AMP-dep_synth/lig_dom"/>
</dbReference>
<dbReference type="InterPro" id="IPR042099">
    <property type="entry name" value="ANL_N_sf"/>
</dbReference>
<dbReference type="InterPro" id="IPR002123">
    <property type="entry name" value="Plipid/glycerol_acylTrfase"/>
</dbReference>
<dbReference type="NCBIfam" id="NF005959">
    <property type="entry name" value="PRK08043.1"/>
    <property type="match status" value="1"/>
</dbReference>
<dbReference type="PANTHER" id="PTHR43201">
    <property type="entry name" value="ACYL-COA SYNTHETASE"/>
    <property type="match status" value="1"/>
</dbReference>
<dbReference type="PANTHER" id="PTHR43201:SF8">
    <property type="entry name" value="ACYL-COA SYNTHETASE FAMILY MEMBER 3"/>
    <property type="match status" value="1"/>
</dbReference>
<dbReference type="Pfam" id="PF01553">
    <property type="entry name" value="Acyltransferase"/>
    <property type="match status" value="1"/>
</dbReference>
<dbReference type="Pfam" id="PF00501">
    <property type="entry name" value="AMP-binding"/>
    <property type="match status" value="1"/>
</dbReference>
<dbReference type="SMART" id="SM00563">
    <property type="entry name" value="PlsC"/>
    <property type="match status" value="1"/>
</dbReference>
<dbReference type="SUPFAM" id="SSF56801">
    <property type="entry name" value="Acetyl-CoA synthetase-like"/>
    <property type="match status" value="1"/>
</dbReference>
<dbReference type="SUPFAM" id="SSF69593">
    <property type="entry name" value="Glycerol-3-phosphate (1)-acyltransferase"/>
    <property type="match status" value="1"/>
</dbReference>
<dbReference type="PROSITE" id="PS00455">
    <property type="entry name" value="AMP_BINDING"/>
    <property type="match status" value="1"/>
</dbReference>
<accession>A8AP56</accession>